<name>RRF_PELPD</name>
<proteinExistence type="inferred from homology"/>
<reference key="1">
    <citation type="submission" date="2006-10" db="EMBL/GenBank/DDBJ databases">
        <title>Complete sequence of chromosome of Pelobacter propionicus DSM 2379.</title>
        <authorList>
            <consortium name="US DOE Joint Genome Institute"/>
            <person name="Copeland A."/>
            <person name="Lucas S."/>
            <person name="Lapidus A."/>
            <person name="Barry K."/>
            <person name="Detter J.C."/>
            <person name="Glavina del Rio T."/>
            <person name="Hammon N."/>
            <person name="Israni S."/>
            <person name="Dalin E."/>
            <person name="Tice H."/>
            <person name="Pitluck S."/>
            <person name="Saunders E."/>
            <person name="Brettin T."/>
            <person name="Bruce D."/>
            <person name="Han C."/>
            <person name="Tapia R."/>
            <person name="Schmutz J."/>
            <person name="Larimer F."/>
            <person name="Land M."/>
            <person name="Hauser L."/>
            <person name="Kyrpides N."/>
            <person name="Kim E."/>
            <person name="Lovley D."/>
            <person name="Richardson P."/>
        </authorList>
    </citation>
    <scope>NUCLEOTIDE SEQUENCE [LARGE SCALE GENOMIC DNA]</scope>
    <source>
        <strain>DSM 2379 / NBRC 103807 / OttBd1</strain>
    </source>
</reference>
<comment type="function">
    <text evidence="1">Responsible for the release of ribosomes from messenger RNA at the termination of protein biosynthesis. May increase the efficiency of translation by recycling ribosomes from one round of translation to another.</text>
</comment>
<comment type="subcellular location">
    <subcellularLocation>
        <location evidence="1">Cytoplasm</location>
    </subcellularLocation>
</comment>
<comment type="similarity">
    <text evidence="1">Belongs to the RRF family.</text>
</comment>
<organism>
    <name type="scientific">Pelobacter propionicus (strain DSM 2379 / NBRC 103807 / OttBd1)</name>
    <dbReference type="NCBI Taxonomy" id="338966"/>
    <lineage>
        <taxon>Bacteria</taxon>
        <taxon>Pseudomonadati</taxon>
        <taxon>Thermodesulfobacteriota</taxon>
        <taxon>Desulfuromonadia</taxon>
        <taxon>Desulfuromonadales</taxon>
        <taxon>Desulfuromonadaceae</taxon>
        <taxon>Pelobacter</taxon>
    </lineage>
</organism>
<sequence>MPKTVLSDMKTHMEKTVAVLKAEFQKVRTGRASTAILDSVKMDYYGNPTPISQIATLAIPEPRMITITPWEAKQISVIEKAIFNANIGLTPSNDGKSIRLSLPPLTEERRREIVKDLKKMAEDNRVALRNIRRDAIDRLKKLEKDKSITEDELKKYEKEVQDNTKSFEIKIDEAMTNKEKEVMEV</sequence>
<gene>
    <name evidence="1" type="primary">frr</name>
    <name type="ordered locus">Ppro_2047</name>
</gene>
<keyword id="KW-0963">Cytoplasm</keyword>
<keyword id="KW-0648">Protein biosynthesis</keyword>
<keyword id="KW-1185">Reference proteome</keyword>
<evidence type="ECO:0000255" key="1">
    <source>
        <dbReference type="HAMAP-Rule" id="MF_00040"/>
    </source>
</evidence>
<protein>
    <recommendedName>
        <fullName evidence="1">Ribosome-recycling factor</fullName>
        <shortName evidence="1">RRF</shortName>
    </recommendedName>
    <alternativeName>
        <fullName evidence="1">Ribosome-releasing factor</fullName>
    </alternativeName>
</protein>
<dbReference type="EMBL" id="CP000482">
    <property type="protein sequence ID" value="ABK99655.1"/>
    <property type="molecule type" value="Genomic_DNA"/>
</dbReference>
<dbReference type="RefSeq" id="WP_011735921.1">
    <property type="nucleotide sequence ID" value="NC_008609.1"/>
</dbReference>
<dbReference type="SMR" id="A1AQN5"/>
<dbReference type="STRING" id="338966.Ppro_2047"/>
<dbReference type="KEGG" id="ppd:Ppro_2047"/>
<dbReference type="eggNOG" id="COG0233">
    <property type="taxonomic scope" value="Bacteria"/>
</dbReference>
<dbReference type="HOGENOM" id="CLU_073981_2_0_7"/>
<dbReference type="OrthoDB" id="9804006at2"/>
<dbReference type="Proteomes" id="UP000006732">
    <property type="component" value="Chromosome"/>
</dbReference>
<dbReference type="GO" id="GO:0005829">
    <property type="term" value="C:cytosol"/>
    <property type="evidence" value="ECO:0007669"/>
    <property type="project" value="GOC"/>
</dbReference>
<dbReference type="GO" id="GO:0043023">
    <property type="term" value="F:ribosomal large subunit binding"/>
    <property type="evidence" value="ECO:0007669"/>
    <property type="project" value="TreeGrafter"/>
</dbReference>
<dbReference type="GO" id="GO:0002184">
    <property type="term" value="P:cytoplasmic translational termination"/>
    <property type="evidence" value="ECO:0007669"/>
    <property type="project" value="TreeGrafter"/>
</dbReference>
<dbReference type="CDD" id="cd00520">
    <property type="entry name" value="RRF"/>
    <property type="match status" value="1"/>
</dbReference>
<dbReference type="FunFam" id="1.10.132.20:FF:000001">
    <property type="entry name" value="Ribosome-recycling factor"/>
    <property type="match status" value="1"/>
</dbReference>
<dbReference type="FunFam" id="3.30.1360.40:FF:000001">
    <property type="entry name" value="Ribosome-recycling factor"/>
    <property type="match status" value="1"/>
</dbReference>
<dbReference type="Gene3D" id="3.30.1360.40">
    <property type="match status" value="1"/>
</dbReference>
<dbReference type="Gene3D" id="1.10.132.20">
    <property type="entry name" value="Ribosome-recycling factor"/>
    <property type="match status" value="1"/>
</dbReference>
<dbReference type="HAMAP" id="MF_00040">
    <property type="entry name" value="RRF"/>
    <property type="match status" value="1"/>
</dbReference>
<dbReference type="InterPro" id="IPR002661">
    <property type="entry name" value="Ribosome_recyc_fac"/>
</dbReference>
<dbReference type="InterPro" id="IPR023584">
    <property type="entry name" value="Ribosome_recyc_fac_dom"/>
</dbReference>
<dbReference type="InterPro" id="IPR036191">
    <property type="entry name" value="RRF_sf"/>
</dbReference>
<dbReference type="NCBIfam" id="TIGR00496">
    <property type="entry name" value="frr"/>
    <property type="match status" value="1"/>
</dbReference>
<dbReference type="PANTHER" id="PTHR20982:SF3">
    <property type="entry name" value="MITOCHONDRIAL RIBOSOME RECYCLING FACTOR PSEUDO 1"/>
    <property type="match status" value="1"/>
</dbReference>
<dbReference type="PANTHER" id="PTHR20982">
    <property type="entry name" value="RIBOSOME RECYCLING FACTOR"/>
    <property type="match status" value="1"/>
</dbReference>
<dbReference type="Pfam" id="PF01765">
    <property type="entry name" value="RRF"/>
    <property type="match status" value="1"/>
</dbReference>
<dbReference type="SUPFAM" id="SSF55194">
    <property type="entry name" value="Ribosome recycling factor, RRF"/>
    <property type="match status" value="1"/>
</dbReference>
<feature type="chain" id="PRO_1000003220" description="Ribosome-recycling factor">
    <location>
        <begin position="1"/>
        <end position="185"/>
    </location>
</feature>
<accession>A1AQN5</accession>